<protein>
    <recommendedName>
        <fullName>Inhibitor of growth protein 3</fullName>
    </recommendedName>
</protein>
<gene>
    <name type="primary">ING3</name>
    <name type="ORF">RCJMB04_13g20</name>
</gene>
<comment type="function">
    <text evidence="1">Component of the NuA4 histone acetyltransferase (HAT) complex which is involved in transcriptional activation of select genes principally by acetylation of nucleosomal histone H4 and H2A. This modification may both alter nucleosome - DNA interactions and promote interaction of the modified histones with other proteins which positively regulate transcription (By similarity). NuA4 may also play a direct role in DNA repair when directly recruited to sites of DNA damage (By similarity).</text>
</comment>
<comment type="subunit">
    <text evidence="1">Interacts with H3K4me3 and to a lesser extent with H3K4me2. Component of the NuA4 histone acetyltransferase complex.</text>
</comment>
<comment type="subcellular location">
    <subcellularLocation>
        <location evidence="1">Nucleus</location>
    </subcellularLocation>
</comment>
<comment type="domain">
    <text evidence="1">The PHD-type zinc finger mediates the binding to H3K4me3.</text>
</comment>
<comment type="similarity">
    <text evidence="5">Belongs to the ING family.</text>
</comment>
<organism>
    <name type="scientific">Gallus gallus</name>
    <name type="common">Chicken</name>
    <dbReference type="NCBI Taxonomy" id="9031"/>
    <lineage>
        <taxon>Eukaryota</taxon>
        <taxon>Metazoa</taxon>
        <taxon>Chordata</taxon>
        <taxon>Craniata</taxon>
        <taxon>Vertebrata</taxon>
        <taxon>Euteleostomi</taxon>
        <taxon>Archelosauria</taxon>
        <taxon>Archosauria</taxon>
        <taxon>Dinosauria</taxon>
        <taxon>Saurischia</taxon>
        <taxon>Theropoda</taxon>
        <taxon>Coelurosauria</taxon>
        <taxon>Aves</taxon>
        <taxon>Neognathae</taxon>
        <taxon>Galloanserae</taxon>
        <taxon>Galliformes</taxon>
        <taxon>Phasianidae</taxon>
        <taxon>Phasianinae</taxon>
        <taxon>Gallus</taxon>
    </lineage>
</organism>
<proteinExistence type="evidence at transcript level"/>
<feature type="chain" id="PRO_0000354693" description="Inhibitor of growth protein 3">
    <location>
        <begin position="1"/>
        <end position="417"/>
    </location>
</feature>
<feature type="zinc finger region" description="PHD-type" evidence="3">
    <location>
        <begin position="359"/>
        <end position="408"/>
    </location>
</feature>
<feature type="region of interest" description="Disordered" evidence="4">
    <location>
        <begin position="128"/>
        <end position="203"/>
    </location>
</feature>
<feature type="region of interest" description="Disordered" evidence="4">
    <location>
        <begin position="286"/>
        <end position="320"/>
    </location>
</feature>
<feature type="compositionally biased region" description="Basic residues" evidence="4">
    <location>
        <begin position="136"/>
        <end position="152"/>
    </location>
</feature>
<feature type="compositionally biased region" description="Basic and acidic residues" evidence="4">
    <location>
        <begin position="156"/>
        <end position="168"/>
    </location>
</feature>
<feature type="compositionally biased region" description="Low complexity" evidence="4">
    <location>
        <begin position="189"/>
        <end position="203"/>
    </location>
</feature>
<feature type="compositionally biased region" description="Low complexity" evidence="4">
    <location>
        <begin position="286"/>
        <end position="295"/>
    </location>
</feature>
<feature type="compositionally biased region" description="Low complexity" evidence="4">
    <location>
        <begin position="307"/>
        <end position="320"/>
    </location>
</feature>
<feature type="binding site" evidence="2">
    <location>
        <position position="362"/>
    </location>
    <ligand>
        <name>Zn(2+)</name>
        <dbReference type="ChEBI" id="CHEBI:29105"/>
        <label>1</label>
    </ligand>
</feature>
<feature type="binding site" evidence="2">
    <location>
        <position position="364"/>
    </location>
    <ligand>
        <name>Zn(2+)</name>
        <dbReference type="ChEBI" id="CHEBI:29105"/>
        <label>1</label>
    </ligand>
</feature>
<feature type="binding site" evidence="2">
    <location>
        <position position="375"/>
    </location>
    <ligand>
        <name>Zn(2+)</name>
        <dbReference type="ChEBI" id="CHEBI:29105"/>
        <label>2</label>
    </ligand>
</feature>
<feature type="binding site" evidence="2">
    <location>
        <position position="380"/>
    </location>
    <ligand>
        <name>Zn(2+)</name>
        <dbReference type="ChEBI" id="CHEBI:29105"/>
        <label>2</label>
    </ligand>
</feature>
<feature type="binding site" evidence="2">
    <location>
        <position position="386"/>
    </location>
    <ligand>
        <name>Zn(2+)</name>
        <dbReference type="ChEBI" id="CHEBI:29105"/>
        <label>1</label>
    </ligand>
</feature>
<feature type="binding site" evidence="2">
    <location>
        <position position="389"/>
    </location>
    <ligand>
        <name>Zn(2+)</name>
        <dbReference type="ChEBI" id="CHEBI:29105"/>
        <label>1</label>
    </ligand>
</feature>
<feature type="binding site" evidence="2">
    <location>
        <position position="402"/>
    </location>
    <ligand>
        <name>Zn(2+)</name>
        <dbReference type="ChEBI" id="CHEBI:29105"/>
        <label>2</label>
    </ligand>
</feature>
<feature type="binding site" evidence="2">
    <location>
        <position position="405"/>
    </location>
    <ligand>
        <name>Zn(2+)</name>
        <dbReference type="ChEBI" id="CHEBI:29105"/>
        <label>2</label>
    </ligand>
</feature>
<feature type="site" description="Histone H3K4me3 binding" evidence="2">
    <location>
        <position position="361"/>
    </location>
</feature>
<feature type="site" description="Histone H3K4me3 binding" evidence="2">
    <location>
        <position position="372"/>
    </location>
</feature>
<feature type="site" description="Histone H3K4me3 binding" evidence="2">
    <location>
        <position position="376"/>
    </location>
</feature>
<feature type="site" description="Histone H3K4me3 binding" evidence="2">
    <location>
        <position position="384"/>
    </location>
</feature>
<accession>Q5ZK36</accession>
<sequence>MLYLEDYLEMIEQLPMDLRDRFTEMREMDLQVQNAMDQLEQRVNEFFMNAKKNKPEWREEQMTSIKKDYYKALEDADEKVQLANQIYDLVDRHLRKLDQELAKFKMELEADNAGITEILERRSLELDTPSQPVNNHHAHSHTPVEKRKHNPSSHHGATDHVPEKKFKSEALLSTLTSDASKENTPGRRNNNSSSSSNNAYNTNSSQPLASYNLGSLSSGSGAGAITMAAAQAVQATAQMKEGRRTSSLKASYEAFKNNDFQLGREFSLSRDSTGYSSSALASTLTQTLSSSSTDSRSGRKSKNNNKSSSQQSSSSSSSSSLSSCSSSSALAQELSQQTAVIPESDSNSQVDWTYDPNEPRYCICNQVSYGEMVGCDNQDCPIEWFHYGCVGLTEAPKGKWYCPQCTAAMKRRGSRHK</sequence>
<evidence type="ECO:0000250" key="1"/>
<evidence type="ECO:0000250" key="2">
    <source>
        <dbReference type="UniProtKB" id="Q9UK53"/>
    </source>
</evidence>
<evidence type="ECO:0000255" key="3">
    <source>
        <dbReference type="PROSITE-ProRule" id="PRU00146"/>
    </source>
</evidence>
<evidence type="ECO:0000256" key="4">
    <source>
        <dbReference type="SAM" id="MobiDB-lite"/>
    </source>
</evidence>
<evidence type="ECO:0000305" key="5"/>
<reference key="1">
    <citation type="journal article" date="2005" name="Genome Biol.">
        <title>Full-length cDNAs from chicken bursal lymphocytes to facilitate gene function analysis.</title>
        <authorList>
            <person name="Caldwell R.B."/>
            <person name="Kierzek A.M."/>
            <person name="Arakawa H."/>
            <person name="Bezzubov Y."/>
            <person name="Zaim J."/>
            <person name="Fiedler P."/>
            <person name="Kutter S."/>
            <person name="Blagodatski A."/>
            <person name="Kostovska D."/>
            <person name="Koter M."/>
            <person name="Plachy J."/>
            <person name="Carninci P."/>
            <person name="Hayashizaki Y."/>
            <person name="Buerstedde J.-M."/>
        </authorList>
    </citation>
    <scope>NUCLEOTIDE SEQUENCE [LARGE SCALE MRNA]</scope>
    <source>
        <strain>CB</strain>
        <tissue>Bursa of Fabricius</tissue>
    </source>
</reference>
<keyword id="KW-0156">Chromatin regulator</keyword>
<keyword id="KW-0341">Growth regulation</keyword>
<keyword id="KW-0479">Metal-binding</keyword>
<keyword id="KW-0539">Nucleus</keyword>
<keyword id="KW-1185">Reference proteome</keyword>
<keyword id="KW-0804">Transcription</keyword>
<keyword id="KW-0805">Transcription regulation</keyword>
<keyword id="KW-0862">Zinc</keyword>
<keyword id="KW-0863">Zinc-finger</keyword>
<name>ING3_CHICK</name>
<dbReference type="EMBL" id="AJ720248">
    <property type="protein sequence ID" value="CAG31907.1"/>
    <property type="molecule type" value="mRNA"/>
</dbReference>
<dbReference type="RefSeq" id="NP_001025904.2">
    <property type="nucleotide sequence ID" value="NM_001030733.2"/>
</dbReference>
<dbReference type="BMRB" id="Q5ZK36"/>
<dbReference type="SMR" id="Q5ZK36"/>
<dbReference type="FunCoup" id="Q5ZK36">
    <property type="interactions" value="1643"/>
</dbReference>
<dbReference type="STRING" id="9031.ENSGALP00000014665"/>
<dbReference type="PaxDb" id="9031-ENSGALP00000014665"/>
<dbReference type="GeneID" id="417762"/>
<dbReference type="KEGG" id="gga:417762"/>
<dbReference type="CTD" id="54556"/>
<dbReference type="VEuPathDB" id="HostDB:geneid_417762"/>
<dbReference type="eggNOG" id="KOG1973">
    <property type="taxonomic scope" value="Eukaryota"/>
</dbReference>
<dbReference type="InParanoid" id="Q5ZK36"/>
<dbReference type="OrthoDB" id="5411773at2759"/>
<dbReference type="PhylomeDB" id="Q5ZK36"/>
<dbReference type="PRO" id="PR:Q5ZK36"/>
<dbReference type="Proteomes" id="UP000000539">
    <property type="component" value="Unassembled WGS sequence"/>
</dbReference>
<dbReference type="GO" id="GO:0035267">
    <property type="term" value="C:NuA4 histone acetyltransferase complex"/>
    <property type="evidence" value="ECO:0000318"/>
    <property type="project" value="GO_Central"/>
</dbReference>
<dbReference type="GO" id="GO:0000812">
    <property type="term" value="C:Swr1 complex"/>
    <property type="evidence" value="ECO:0000250"/>
    <property type="project" value="UniProtKB"/>
</dbReference>
<dbReference type="GO" id="GO:0008270">
    <property type="term" value="F:zinc ion binding"/>
    <property type="evidence" value="ECO:0007669"/>
    <property type="project" value="UniProtKB-KW"/>
</dbReference>
<dbReference type="GO" id="GO:0006338">
    <property type="term" value="P:chromatin remodeling"/>
    <property type="evidence" value="ECO:0007669"/>
    <property type="project" value="GOC"/>
</dbReference>
<dbReference type="CDD" id="cd16858">
    <property type="entry name" value="ING_ING3_Yng2p"/>
    <property type="match status" value="1"/>
</dbReference>
<dbReference type="CDD" id="cd15585">
    <property type="entry name" value="PHD_ING3"/>
    <property type="match status" value="1"/>
</dbReference>
<dbReference type="FunFam" id="3.30.40.10:FF:000103">
    <property type="entry name" value="Inhibitor of growth protein"/>
    <property type="match status" value="1"/>
</dbReference>
<dbReference type="Gene3D" id="6.10.140.1740">
    <property type="match status" value="1"/>
</dbReference>
<dbReference type="Gene3D" id="3.30.40.10">
    <property type="entry name" value="Zinc/RING finger domain, C3HC4 (zinc finger)"/>
    <property type="match status" value="1"/>
</dbReference>
<dbReference type="InterPro" id="IPR042020">
    <property type="entry name" value="ING3_PHD"/>
</dbReference>
<dbReference type="InterPro" id="IPR028651">
    <property type="entry name" value="ING_fam"/>
</dbReference>
<dbReference type="InterPro" id="IPR024610">
    <property type="entry name" value="ING_N_histone-binding"/>
</dbReference>
<dbReference type="InterPro" id="IPR019786">
    <property type="entry name" value="Zinc_finger_PHD-type_CS"/>
</dbReference>
<dbReference type="InterPro" id="IPR011011">
    <property type="entry name" value="Znf_FYVE_PHD"/>
</dbReference>
<dbReference type="InterPro" id="IPR001965">
    <property type="entry name" value="Znf_PHD"/>
</dbReference>
<dbReference type="InterPro" id="IPR019787">
    <property type="entry name" value="Znf_PHD-finger"/>
</dbReference>
<dbReference type="InterPro" id="IPR013083">
    <property type="entry name" value="Znf_RING/FYVE/PHD"/>
</dbReference>
<dbReference type="PANTHER" id="PTHR10333">
    <property type="entry name" value="INHIBITOR OF GROWTH PROTEIN"/>
    <property type="match status" value="1"/>
</dbReference>
<dbReference type="PANTHER" id="PTHR10333:SF103">
    <property type="entry name" value="INHIBITOR OF GROWTH PROTEIN 3"/>
    <property type="match status" value="1"/>
</dbReference>
<dbReference type="Pfam" id="PF12998">
    <property type="entry name" value="ING"/>
    <property type="match status" value="1"/>
</dbReference>
<dbReference type="SMART" id="SM01408">
    <property type="entry name" value="ING"/>
    <property type="match status" value="1"/>
</dbReference>
<dbReference type="SMART" id="SM00249">
    <property type="entry name" value="PHD"/>
    <property type="match status" value="1"/>
</dbReference>
<dbReference type="SUPFAM" id="SSF57903">
    <property type="entry name" value="FYVE/PHD zinc finger"/>
    <property type="match status" value="1"/>
</dbReference>
<dbReference type="PROSITE" id="PS01359">
    <property type="entry name" value="ZF_PHD_1"/>
    <property type="match status" value="1"/>
</dbReference>
<dbReference type="PROSITE" id="PS50016">
    <property type="entry name" value="ZF_PHD_2"/>
    <property type="match status" value="1"/>
</dbReference>